<gene>
    <name type="primary">rpmB</name>
    <name type="ordered locus">XF_1206</name>
</gene>
<protein>
    <recommendedName>
        <fullName evidence="1">Large ribosomal subunit protein bL28</fullName>
    </recommendedName>
    <alternativeName>
        <fullName>50S ribosomal protein L28</fullName>
    </alternativeName>
</protein>
<comment type="similarity">
    <text evidence="1">Belongs to the bacterial ribosomal protein bL28 family.</text>
</comment>
<reference key="1">
    <citation type="journal article" date="2000" name="Nature">
        <title>The genome sequence of the plant pathogen Xylella fastidiosa.</title>
        <authorList>
            <person name="Simpson A.J.G."/>
            <person name="Reinach F.C."/>
            <person name="Arruda P."/>
            <person name="Abreu F.A."/>
            <person name="Acencio M."/>
            <person name="Alvarenga R."/>
            <person name="Alves L.M.C."/>
            <person name="Araya J.E."/>
            <person name="Baia G.S."/>
            <person name="Baptista C.S."/>
            <person name="Barros M.H."/>
            <person name="Bonaccorsi E.D."/>
            <person name="Bordin S."/>
            <person name="Bove J.M."/>
            <person name="Briones M.R.S."/>
            <person name="Bueno M.R.P."/>
            <person name="Camargo A.A."/>
            <person name="Camargo L.E.A."/>
            <person name="Carraro D.M."/>
            <person name="Carrer H."/>
            <person name="Colauto N.B."/>
            <person name="Colombo C."/>
            <person name="Costa F.F."/>
            <person name="Costa M.C.R."/>
            <person name="Costa-Neto C.M."/>
            <person name="Coutinho L.L."/>
            <person name="Cristofani M."/>
            <person name="Dias-Neto E."/>
            <person name="Docena C."/>
            <person name="El-Dorry H."/>
            <person name="Facincani A.P."/>
            <person name="Ferreira A.J.S."/>
            <person name="Ferreira V.C.A."/>
            <person name="Ferro J.A."/>
            <person name="Fraga J.S."/>
            <person name="Franca S.C."/>
            <person name="Franco M.C."/>
            <person name="Frohme M."/>
            <person name="Furlan L.R."/>
            <person name="Garnier M."/>
            <person name="Goldman G.H."/>
            <person name="Goldman M.H.S."/>
            <person name="Gomes S.L."/>
            <person name="Gruber A."/>
            <person name="Ho P.L."/>
            <person name="Hoheisel J.D."/>
            <person name="Junqueira M.L."/>
            <person name="Kemper E.L."/>
            <person name="Kitajima J.P."/>
            <person name="Krieger J.E."/>
            <person name="Kuramae E.E."/>
            <person name="Laigret F."/>
            <person name="Lambais M.R."/>
            <person name="Leite L.C.C."/>
            <person name="Lemos E.G.M."/>
            <person name="Lemos M.V.F."/>
            <person name="Lopes S.A."/>
            <person name="Lopes C.R."/>
            <person name="Machado J.A."/>
            <person name="Machado M.A."/>
            <person name="Madeira A.M.B.N."/>
            <person name="Madeira H.M.F."/>
            <person name="Marino C.L."/>
            <person name="Marques M.V."/>
            <person name="Martins E.A.L."/>
            <person name="Martins E.M.F."/>
            <person name="Matsukuma A.Y."/>
            <person name="Menck C.F.M."/>
            <person name="Miracca E.C."/>
            <person name="Miyaki C.Y."/>
            <person name="Monteiro-Vitorello C.B."/>
            <person name="Moon D.H."/>
            <person name="Nagai M.A."/>
            <person name="Nascimento A.L.T.O."/>
            <person name="Netto L.E.S."/>
            <person name="Nhani A. Jr."/>
            <person name="Nobrega F.G."/>
            <person name="Nunes L.R."/>
            <person name="Oliveira M.A."/>
            <person name="de Oliveira M.C."/>
            <person name="de Oliveira R.C."/>
            <person name="Palmieri D.A."/>
            <person name="Paris A."/>
            <person name="Peixoto B.R."/>
            <person name="Pereira G.A.G."/>
            <person name="Pereira H.A. Jr."/>
            <person name="Pesquero J.B."/>
            <person name="Quaggio R.B."/>
            <person name="Roberto P.G."/>
            <person name="Rodrigues V."/>
            <person name="de Rosa A.J.M."/>
            <person name="de Rosa V.E. Jr."/>
            <person name="de Sa R.G."/>
            <person name="Santelli R.V."/>
            <person name="Sawasaki H.E."/>
            <person name="da Silva A.C.R."/>
            <person name="da Silva A.M."/>
            <person name="da Silva F.R."/>
            <person name="Silva W.A. Jr."/>
            <person name="da Silveira J.F."/>
            <person name="Silvestri M.L.Z."/>
            <person name="Siqueira W.J."/>
            <person name="de Souza A.A."/>
            <person name="de Souza A.P."/>
            <person name="Terenzi M.F."/>
            <person name="Truffi D."/>
            <person name="Tsai S.M."/>
            <person name="Tsuhako M.H."/>
            <person name="Vallada H."/>
            <person name="Van Sluys M.A."/>
            <person name="Verjovski-Almeida S."/>
            <person name="Vettore A.L."/>
            <person name="Zago M.A."/>
            <person name="Zatz M."/>
            <person name="Meidanis J."/>
            <person name="Setubal J.C."/>
        </authorList>
    </citation>
    <scope>NUCLEOTIDE SEQUENCE [LARGE SCALE GENOMIC DNA]</scope>
    <source>
        <strain>9a5c</strain>
    </source>
</reference>
<proteinExistence type="inferred from homology"/>
<feature type="chain" id="PRO_0000178595" description="Large ribosomal subunit protein bL28">
    <location>
        <begin position="1"/>
        <end position="78"/>
    </location>
</feature>
<accession>P66162</accession>
<accession>Q9PE22</accession>
<dbReference type="EMBL" id="AE003849">
    <property type="protein sequence ID" value="AAF84016.1"/>
    <property type="molecule type" value="Genomic_DNA"/>
</dbReference>
<dbReference type="PIR" id="E82711">
    <property type="entry name" value="E82711"/>
</dbReference>
<dbReference type="RefSeq" id="WP_004086565.1">
    <property type="nucleotide sequence ID" value="NC_002488.3"/>
</dbReference>
<dbReference type="SMR" id="P66162"/>
<dbReference type="STRING" id="160492.XF_1206"/>
<dbReference type="GeneID" id="93904190"/>
<dbReference type="KEGG" id="xfa:XF_1206"/>
<dbReference type="eggNOG" id="COG0227">
    <property type="taxonomic scope" value="Bacteria"/>
</dbReference>
<dbReference type="HOGENOM" id="CLU_064548_3_1_6"/>
<dbReference type="Proteomes" id="UP000000812">
    <property type="component" value="Chromosome"/>
</dbReference>
<dbReference type="GO" id="GO:0022625">
    <property type="term" value="C:cytosolic large ribosomal subunit"/>
    <property type="evidence" value="ECO:0007669"/>
    <property type="project" value="TreeGrafter"/>
</dbReference>
<dbReference type="GO" id="GO:0003735">
    <property type="term" value="F:structural constituent of ribosome"/>
    <property type="evidence" value="ECO:0007669"/>
    <property type="project" value="InterPro"/>
</dbReference>
<dbReference type="GO" id="GO:0006412">
    <property type="term" value="P:translation"/>
    <property type="evidence" value="ECO:0007669"/>
    <property type="project" value="UniProtKB-UniRule"/>
</dbReference>
<dbReference type="FunFam" id="2.30.170.40:FF:000001">
    <property type="entry name" value="50S ribosomal protein L28"/>
    <property type="match status" value="1"/>
</dbReference>
<dbReference type="Gene3D" id="2.30.170.40">
    <property type="entry name" value="Ribosomal protein L28/L24"/>
    <property type="match status" value="1"/>
</dbReference>
<dbReference type="HAMAP" id="MF_00373">
    <property type="entry name" value="Ribosomal_bL28"/>
    <property type="match status" value="1"/>
</dbReference>
<dbReference type="InterPro" id="IPR026569">
    <property type="entry name" value="Ribosomal_bL28"/>
</dbReference>
<dbReference type="InterPro" id="IPR034704">
    <property type="entry name" value="Ribosomal_bL28/bL31-like_sf"/>
</dbReference>
<dbReference type="InterPro" id="IPR001383">
    <property type="entry name" value="Ribosomal_bL28_bact-type"/>
</dbReference>
<dbReference type="InterPro" id="IPR037147">
    <property type="entry name" value="Ribosomal_bL28_sf"/>
</dbReference>
<dbReference type="NCBIfam" id="TIGR00009">
    <property type="entry name" value="L28"/>
    <property type="match status" value="1"/>
</dbReference>
<dbReference type="PANTHER" id="PTHR13528">
    <property type="entry name" value="39S RIBOSOMAL PROTEIN L28, MITOCHONDRIAL"/>
    <property type="match status" value="1"/>
</dbReference>
<dbReference type="PANTHER" id="PTHR13528:SF2">
    <property type="entry name" value="LARGE RIBOSOMAL SUBUNIT PROTEIN BL28M"/>
    <property type="match status" value="1"/>
</dbReference>
<dbReference type="Pfam" id="PF00830">
    <property type="entry name" value="Ribosomal_L28"/>
    <property type="match status" value="1"/>
</dbReference>
<dbReference type="SUPFAM" id="SSF143800">
    <property type="entry name" value="L28p-like"/>
    <property type="match status" value="1"/>
</dbReference>
<name>RL28_XYLFA</name>
<organism>
    <name type="scientific">Xylella fastidiosa (strain 9a5c)</name>
    <dbReference type="NCBI Taxonomy" id="160492"/>
    <lineage>
        <taxon>Bacteria</taxon>
        <taxon>Pseudomonadati</taxon>
        <taxon>Pseudomonadota</taxon>
        <taxon>Gammaproteobacteria</taxon>
        <taxon>Lysobacterales</taxon>
        <taxon>Lysobacteraceae</taxon>
        <taxon>Xylella</taxon>
    </lineage>
</organism>
<sequence>MSRVCQVTGKRVQTGNNVSHANNKTRRRFLPNLHKRRFWVASENRWVKLRVSTCAVRTIDKNGIDAVLAELRASGEKV</sequence>
<keyword id="KW-0687">Ribonucleoprotein</keyword>
<keyword id="KW-0689">Ribosomal protein</keyword>
<evidence type="ECO:0000305" key="1"/>